<reference key="1">
    <citation type="journal article" date="2004" name="Proc. Natl. Acad. Sci. U.S.A.">
        <title>The diploid genome sequence of Candida albicans.</title>
        <authorList>
            <person name="Jones T."/>
            <person name="Federspiel N.A."/>
            <person name="Chibana H."/>
            <person name="Dungan J."/>
            <person name="Kalman S."/>
            <person name="Magee B.B."/>
            <person name="Newport G."/>
            <person name="Thorstenson Y.R."/>
            <person name="Agabian N."/>
            <person name="Magee P.T."/>
            <person name="Davis R.W."/>
            <person name="Scherer S."/>
        </authorList>
    </citation>
    <scope>NUCLEOTIDE SEQUENCE [LARGE SCALE GENOMIC DNA]</scope>
    <source>
        <strain>SC5314 / ATCC MYA-2876</strain>
    </source>
</reference>
<reference key="2">
    <citation type="journal article" date="2007" name="Genome Biol.">
        <title>Assembly of the Candida albicans genome into sixteen supercontigs aligned on the eight chromosomes.</title>
        <authorList>
            <person name="van het Hoog M."/>
            <person name="Rast T.J."/>
            <person name="Martchenko M."/>
            <person name="Grindle S."/>
            <person name="Dignard D."/>
            <person name="Hogues H."/>
            <person name="Cuomo C."/>
            <person name="Berriman M."/>
            <person name="Scherer S."/>
            <person name="Magee B.B."/>
            <person name="Whiteway M."/>
            <person name="Chibana H."/>
            <person name="Nantel A."/>
            <person name="Magee P.T."/>
        </authorList>
    </citation>
    <scope>GENOME REANNOTATION</scope>
    <source>
        <strain>SC5314 / ATCC MYA-2876</strain>
    </source>
</reference>
<reference key="3">
    <citation type="journal article" date="2013" name="Genome Biol.">
        <title>Assembly of a phased diploid Candida albicans genome facilitates allele-specific measurements and provides a simple model for repeat and indel structure.</title>
        <authorList>
            <person name="Muzzey D."/>
            <person name="Schwartz K."/>
            <person name="Weissman J.S."/>
            <person name="Sherlock G."/>
        </authorList>
    </citation>
    <scope>NUCLEOTIDE SEQUENCE [LARGE SCALE GENOMIC DNA]</scope>
    <scope>GENOME REANNOTATION</scope>
    <source>
        <strain>SC5314 / ATCC MYA-2876</strain>
    </source>
</reference>
<feature type="chain" id="PRO_0000320371" description="Nucleolar protein 16">
    <location>
        <begin position="1"/>
        <end position="218"/>
    </location>
</feature>
<feature type="region of interest" description="Disordered" evidence="2">
    <location>
        <begin position="1"/>
        <end position="29"/>
    </location>
</feature>
<feature type="region of interest" description="Disordered" evidence="2">
    <location>
        <begin position="58"/>
        <end position="92"/>
    </location>
</feature>
<feature type="compositionally biased region" description="Basic residues" evidence="2">
    <location>
        <begin position="1"/>
        <end position="23"/>
    </location>
</feature>
<feature type="compositionally biased region" description="Basic and acidic residues" evidence="2">
    <location>
        <begin position="64"/>
        <end position="84"/>
    </location>
</feature>
<dbReference type="EMBL" id="CP017624">
    <property type="protein sequence ID" value="AOW27944.1"/>
    <property type="molecule type" value="Genomic_DNA"/>
</dbReference>
<dbReference type="RefSeq" id="XP_714560.2">
    <property type="nucleotide sequence ID" value="XM_709467.2"/>
</dbReference>
<dbReference type="SMR" id="Q59YD8"/>
<dbReference type="FunCoup" id="Q59YD8">
    <property type="interactions" value="315"/>
</dbReference>
<dbReference type="STRING" id="237561.Q59YD8"/>
<dbReference type="EnsemblFungi" id="C2_09660W_A-T">
    <property type="protein sequence ID" value="C2_09660W_A-T-p1"/>
    <property type="gene ID" value="C2_09660W_A"/>
</dbReference>
<dbReference type="GeneID" id="3643793"/>
<dbReference type="KEGG" id="cal:CAALFM_C209660WA"/>
<dbReference type="CGD" id="CAL0000180616">
    <property type="gene designation" value="orf19.8966"/>
</dbReference>
<dbReference type="VEuPathDB" id="FungiDB:C2_09660W_A"/>
<dbReference type="eggNOG" id="KOG4771">
    <property type="taxonomic scope" value="Eukaryota"/>
</dbReference>
<dbReference type="HOGENOM" id="CLU_078857_0_0_1"/>
<dbReference type="InParanoid" id="Q59YD8"/>
<dbReference type="OMA" id="MQQTEAD"/>
<dbReference type="OrthoDB" id="285729at2759"/>
<dbReference type="PRO" id="PR:Q59YD8"/>
<dbReference type="Proteomes" id="UP000000559">
    <property type="component" value="Chromosome 2"/>
</dbReference>
<dbReference type="GO" id="GO:0005730">
    <property type="term" value="C:nucleolus"/>
    <property type="evidence" value="ECO:0000318"/>
    <property type="project" value="GO_Central"/>
</dbReference>
<dbReference type="GO" id="GO:0030687">
    <property type="term" value="C:preribosome, large subunit precursor"/>
    <property type="evidence" value="ECO:0007669"/>
    <property type="project" value="EnsemblFungi"/>
</dbReference>
<dbReference type="GO" id="GO:0042273">
    <property type="term" value="P:ribosomal large subunit biogenesis"/>
    <property type="evidence" value="ECO:0000318"/>
    <property type="project" value="GO_Central"/>
</dbReference>
<dbReference type="GO" id="GO:0006364">
    <property type="term" value="P:rRNA processing"/>
    <property type="evidence" value="ECO:0007669"/>
    <property type="project" value="UniProtKB-KW"/>
</dbReference>
<dbReference type="InterPro" id="IPR019002">
    <property type="entry name" value="Ribosome_biogenesis_Nop16"/>
</dbReference>
<dbReference type="PANTHER" id="PTHR13243">
    <property type="entry name" value="HSPC111 PROTEIN-RELATED"/>
    <property type="match status" value="1"/>
</dbReference>
<dbReference type="PANTHER" id="PTHR13243:SF1">
    <property type="entry name" value="NUCLEOLAR PROTEIN 16"/>
    <property type="match status" value="1"/>
</dbReference>
<dbReference type="Pfam" id="PF09420">
    <property type="entry name" value="Nop16"/>
    <property type="match status" value="1"/>
</dbReference>
<sequence length="218" mass="25654">MTSVRKRKMARSSVKKNTRRTKDKQRNINIHSNPIIEANWDKSLTLKQNYKRLGLRAKLGRSAGGDERKVESLSELQAKREKNQKNQSKHVPTVSEIENLDDPSRIPEGEARLIRDPETNEVIKVIYGTMKVDDKDESEEEIENPSVIKQLEEYAEKNSKIKKERHQSERENDWIKSLYEKYGDDYDKMKWDKKLNIYQQSAGDLKRRIIKWKKANGI</sequence>
<gene>
    <name type="primary">NOP16</name>
    <name type="ordered locus">CAALFM_C209660WA</name>
    <name type="ORF">CaO19.1388</name>
    <name type="ORF">CaO19.8966</name>
</gene>
<comment type="function">
    <text evidence="1">Involved in the biogenesis of the 60S ribosomal subunit.</text>
</comment>
<comment type="subunit">
    <text evidence="1">Component of the pre-66S ribosomal particle.</text>
</comment>
<comment type="subcellular location">
    <subcellularLocation>
        <location evidence="1">Nucleus</location>
        <location evidence="1">Nucleolus</location>
    </subcellularLocation>
</comment>
<comment type="similarity">
    <text evidence="3">Belongs to the NOP16 family.</text>
</comment>
<organism>
    <name type="scientific">Candida albicans (strain SC5314 / ATCC MYA-2876)</name>
    <name type="common">Yeast</name>
    <dbReference type="NCBI Taxonomy" id="237561"/>
    <lineage>
        <taxon>Eukaryota</taxon>
        <taxon>Fungi</taxon>
        <taxon>Dikarya</taxon>
        <taxon>Ascomycota</taxon>
        <taxon>Saccharomycotina</taxon>
        <taxon>Pichiomycetes</taxon>
        <taxon>Debaryomycetaceae</taxon>
        <taxon>Candida/Lodderomyces clade</taxon>
        <taxon>Candida</taxon>
    </lineage>
</organism>
<accession>Q59YD8</accession>
<accession>A0A1D8PIF9</accession>
<keyword id="KW-0539">Nucleus</keyword>
<keyword id="KW-1185">Reference proteome</keyword>
<keyword id="KW-0687">Ribonucleoprotein</keyword>
<keyword id="KW-0690">Ribosome biogenesis</keyword>
<keyword id="KW-0698">rRNA processing</keyword>
<proteinExistence type="inferred from homology"/>
<name>NOP16_CANAL</name>
<evidence type="ECO:0000250" key="1"/>
<evidence type="ECO:0000256" key="2">
    <source>
        <dbReference type="SAM" id="MobiDB-lite"/>
    </source>
</evidence>
<evidence type="ECO:0000305" key="3"/>
<protein>
    <recommendedName>
        <fullName>Nucleolar protein 16</fullName>
    </recommendedName>
</protein>